<evidence type="ECO:0000255" key="1">
    <source>
        <dbReference type="HAMAP-Rule" id="MF_00105"/>
    </source>
</evidence>
<comment type="function">
    <text evidence="1">Necessary for efficient RNA polymerase transcription elongation past template-encoded arresting sites. The arresting sites in DNA have the property of trapping a certain fraction of elongating RNA polymerases that pass through, resulting in locked ternary complexes. Cleavage of the nascent transcript by cleavage factors such as GreA or GreB allows the resumption of elongation from the new 3'terminus. GreA releases sequences of 2 to 3 nucleotides.</text>
</comment>
<comment type="similarity">
    <text evidence="1">Belongs to the GreA/GreB family.</text>
</comment>
<name>GREA_BUCAT</name>
<accession>B8D7R9</accession>
<reference key="1">
    <citation type="journal article" date="2009" name="Science">
        <title>The dynamics and time scale of ongoing genomic erosion in symbiotic bacteria.</title>
        <authorList>
            <person name="Moran N.A."/>
            <person name="McLaughlin H.J."/>
            <person name="Sorek R."/>
        </authorList>
    </citation>
    <scope>NUCLEOTIDE SEQUENCE [LARGE SCALE GENOMIC DNA]</scope>
    <source>
        <strain>Tuc7</strain>
    </source>
</reference>
<keyword id="KW-0238">DNA-binding</keyword>
<keyword id="KW-0804">Transcription</keyword>
<keyword id="KW-0805">Transcription regulation</keyword>
<feature type="chain" id="PRO_1000118951" description="Transcription elongation factor GreA">
    <location>
        <begin position="1"/>
        <end position="159"/>
    </location>
</feature>
<sequence length="159" mass="17983">MINLIPMTVRGAEKLRRELKKLKSINRPRIIAAIAEAREHGDLKENAEYHSAREEQSFCEGRIKEIELKLSNSQIIDVTKISNNGRVIFGSTVSILNIKNNEKFTYRIVGDDESDFKKNLISINSPIARGLIGKEINDVVIICTPGGDVEYKILKINYI</sequence>
<proteinExistence type="inferred from homology"/>
<protein>
    <recommendedName>
        <fullName evidence="1">Transcription elongation factor GreA</fullName>
    </recommendedName>
    <alternativeName>
        <fullName evidence="1">Transcript cleavage factor GreA</fullName>
    </alternativeName>
</protein>
<organism>
    <name type="scientific">Buchnera aphidicola subsp. Acyrthosiphon pisum (strain Tuc7)</name>
    <dbReference type="NCBI Taxonomy" id="561501"/>
    <lineage>
        <taxon>Bacteria</taxon>
        <taxon>Pseudomonadati</taxon>
        <taxon>Pseudomonadota</taxon>
        <taxon>Gammaproteobacteria</taxon>
        <taxon>Enterobacterales</taxon>
        <taxon>Erwiniaceae</taxon>
        <taxon>Buchnera</taxon>
    </lineage>
</organism>
<gene>
    <name evidence="1" type="primary">greA</name>
    <name type="ordered locus">BUAPTUC7_378</name>
</gene>
<dbReference type="EMBL" id="CP001158">
    <property type="protein sequence ID" value="ACL30184.1"/>
    <property type="molecule type" value="Genomic_DNA"/>
</dbReference>
<dbReference type="SMR" id="B8D7R9"/>
<dbReference type="KEGG" id="bau:BUAPTUC7_378"/>
<dbReference type="HOGENOM" id="CLU_101379_2_0_6"/>
<dbReference type="GO" id="GO:0003677">
    <property type="term" value="F:DNA binding"/>
    <property type="evidence" value="ECO:0007669"/>
    <property type="project" value="UniProtKB-UniRule"/>
</dbReference>
<dbReference type="GO" id="GO:0070063">
    <property type="term" value="F:RNA polymerase binding"/>
    <property type="evidence" value="ECO:0007669"/>
    <property type="project" value="InterPro"/>
</dbReference>
<dbReference type="GO" id="GO:0006354">
    <property type="term" value="P:DNA-templated transcription elongation"/>
    <property type="evidence" value="ECO:0007669"/>
    <property type="project" value="TreeGrafter"/>
</dbReference>
<dbReference type="GO" id="GO:0032784">
    <property type="term" value="P:regulation of DNA-templated transcription elongation"/>
    <property type="evidence" value="ECO:0007669"/>
    <property type="project" value="UniProtKB-UniRule"/>
</dbReference>
<dbReference type="FunFam" id="1.10.287.180:FF:000001">
    <property type="entry name" value="Transcription elongation factor GreA"/>
    <property type="match status" value="1"/>
</dbReference>
<dbReference type="FunFam" id="3.10.50.30:FF:000001">
    <property type="entry name" value="Transcription elongation factor GreA"/>
    <property type="match status" value="1"/>
</dbReference>
<dbReference type="Gene3D" id="3.10.50.30">
    <property type="entry name" value="Transcription elongation factor, GreA/GreB, C-terminal domain"/>
    <property type="match status" value="1"/>
</dbReference>
<dbReference type="Gene3D" id="1.10.287.180">
    <property type="entry name" value="Transcription elongation factor, GreA/GreB, N-terminal domain"/>
    <property type="match status" value="1"/>
</dbReference>
<dbReference type="HAMAP" id="MF_00105">
    <property type="entry name" value="GreA_GreB"/>
    <property type="match status" value="1"/>
</dbReference>
<dbReference type="InterPro" id="IPR036953">
    <property type="entry name" value="GreA/GreB_C_sf"/>
</dbReference>
<dbReference type="InterPro" id="IPR018151">
    <property type="entry name" value="TF_GreA/GreB_CS"/>
</dbReference>
<dbReference type="InterPro" id="IPR006359">
    <property type="entry name" value="Tscrpt_elong_fac_GreA"/>
</dbReference>
<dbReference type="InterPro" id="IPR028624">
    <property type="entry name" value="Tscrpt_elong_fac_GreA/B"/>
</dbReference>
<dbReference type="InterPro" id="IPR001437">
    <property type="entry name" value="Tscrpt_elong_fac_GreA/B_C"/>
</dbReference>
<dbReference type="InterPro" id="IPR023459">
    <property type="entry name" value="Tscrpt_elong_fac_GreA/B_fam"/>
</dbReference>
<dbReference type="InterPro" id="IPR022691">
    <property type="entry name" value="Tscrpt_elong_fac_GreA/B_N"/>
</dbReference>
<dbReference type="InterPro" id="IPR036805">
    <property type="entry name" value="Tscrpt_elong_fac_GreA/B_N_sf"/>
</dbReference>
<dbReference type="NCBIfam" id="TIGR01462">
    <property type="entry name" value="greA"/>
    <property type="match status" value="1"/>
</dbReference>
<dbReference type="NCBIfam" id="NF001261">
    <property type="entry name" value="PRK00226.1-2"/>
    <property type="match status" value="1"/>
</dbReference>
<dbReference type="NCBIfam" id="NF001263">
    <property type="entry name" value="PRK00226.1-4"/>
    <property type="match status" value="1"/>
</dbReference>
<dbReference type="NCBIfam" id="NF001264">
    <property type="entry name" value="PRK00226.1-5"/>
    <property type="match status" value="1"/>
</dbReference>
<dbReference type="PANTHER" id="PTHR30437">
    <property type="entry name" value="TRANSCRIPTION ELONGATION FACTOR GREA"/>
    <property type="match status" value="1"/>
</dbReference>
<dbReference type="PANTHER" id="PTHR30437:SF4">
    <property type="entry name" value="TRANSCRIPTION ELONGATION FACTOR GREA"/>
    <property type="match status" value="1"/>
</dbReference>
<dbReference type="Pfam" id="PF01272">
    <property type="entry name" value="GreA_GreB"/>
    <property type="match status" value="1"/>
</dbReference>
<dbReference type="Pfam" id="PF03449">
    <property type="entry name" value="GreA_GreB_N"/>
    <property type="match status" value="1"/>
</dbReference>
<dbReference type="PIRSF" id="PIRSF006092">
    <property type="entry name" value="GreA_GreB"/>
    <property type="match status" value="1"/>
</dbReference>
<dbReference type="SUPFAM" id="SSF54534">
    <property type="entry name" value="FKBP-like"/>
    <property type="match status" value="1"/>
</dbReference>
<dbReference type="SUPFAM" id="SSF46557">
    <property type="entry name" value="GreA transcript cleavage protein, N-terminal domain"/>
    <property type="match status" value="1"/>
</dbReference>
<dbReference type="PROSITE" id="PS00829">
    <property type="entry name" value="GREAB_1"/>
    <property type="match status" value="1"/>
</dbReference>
<dbReference type="PROSITE" id="PS00830">
    <property type="entry name" value="GREAB_2"/>
    <property type="match status" value="1"/>
</dbReference>